<dbReference type="EC" id="2.4.2.52" evidence="1"/>
<dbReference type="EMBL" id="CP000970">
    <property type="protein sequence ID" value="ACB18905.1"/>
    <property type="molecule type" value="Genomic_DNA"/>
</dbReference>
<dbReference type="RefSeq" id="WP_000062471.1">
    <property type="nucleotide sequence ID" value="NC_010498.1"/>
</dbReference>
<dbReference type="KEGG" id="ecm:EcSMS35_0632"/>
<dbReference type="HOGENOM" id="CLU_056179_1_0_6"/>
<dbReference type="Proteomes" id="UP000007011">
    <property type="component" value="Chromosome"/>
</dbReference>
<dbReference type="GO" id="GO:0005524">
    <property type="term" value="F:ATP binding"/>
    <property type="evidence" value="ECO:0007669"/>
    <property type="project" value="UniProtKB-KW"/>
</dbReference>
<dbReference type="GO" id="GO:0046917">
    <property type="term" value="F:triphosphoribosyl-dephospho-CoA synthase activity"/>
    <property type="evidence" value="ECO:0007669"/>
    <property type="project" value="UniProtKB-UniRule"/>
</dbReference>
<dbReference type="GO" id="GO:0051191">
    <property type="term" value="P:prosthetic group biosynthetic process"/>
    <property type="evidence" value="ECO:0007669"/>
    <property type="project" value="TreeGrafter"/>
</dbReference>
<dbReference type="FunFam" id="1.10.4200.10:FF:000001">
    <property type="entry name" value="Triphosphoribosyl-dephospho-CoA synthase CitG"/>
    <property type="match status" value="1"/>
</dbReference>
<dbReference type="Gene3D" id="1.10.4200.10">
    <property type="entry name" value="Triphosphoribosyl-dephospho-CoA protein"/>
    <property type="match status" value="1"/>
</dbReference>
<dbReference type="HAMAP" id="MF_00397">
    <property type="entry name" value="CitG"/>
    <property type="match status" value="1"/>
</dbReference>
<dbReference type="InterPro" id="IPR002736">
    <property type="entry name" value="CitG"/>
</dbReference>
<dbReference type="InterPro" id="IPR017551">
    <property type="entry name" value="TriPribosyl-deP-CoA_syn_CitG"/>
</dbReference>
<dbReference type="NCBIfam" id="TIGR03125">
    <property type="entry name" value="citrate_citG"/>
    <property type="match status" value="1"/>
</dbReference>
<dbReference type="NCBIfam" id="NF007503">
    <property type="entry name" value="PRK10096.1"/>
    <property type="match status" value="1"/>
</dbReference>
<dbReference type="PANTHER" id="PTHR30201:SF2">
    <property type="entry name" value="2-(5''-TRIPHOSPHORIBOSYL)-3'-DEPHOSPHOCOENZYME-A SYNTHASE"/>
    <property type="match status" value="1"/>
</dbReference>
<dbReference type="PANTHER" id="PTHR30201">
    <property type="entry name" value="TRIPHOSPHORIBOSYL-DEPHOSPHO-COA SYNTHASE"/>
    <property type="match status" value="1"/>
</dbReference>
<dbReference type="Pfam" id="PF01874">
    <property type="entry name" value="CitG"/>
    <property type="match status" value="1"/>
</dbReference>
<evidence type="ECO:0000255" key="1">
    <source>
        <dbReference type="HAMAP-Rule" id="MF_00397"/>
    </source>
</evidence>
<keyword id="KW-0067">ATP-binding</keyword>
<keyword id="KW-0547">Nucleotide-binding</keyword>
<keyword id="KW-0808">Transferase</keyword>
<proteinExistence type="inferred from homology"/>
<sequence>MSMPATSTKTTKLATSLIDEYALLGWRAMLTEVNLSPKPGLVDRINCGAHKDMALEDFHRSALAIQGWLPRFIEFGACSAEMAPEAVLNGLRPIGMACEGDMFRATAGVNTHKGSIFSLGLLCAAIGRLLQLNQPVTPTTVCSTAASFCRGLTDRELRTNNSQLTAGQRLYQQLGLTGARGEAEAGYPLVINHALPHYLTLLDQGLDPELALLDTLLLLMATNGDTNVASRGGEGGLRWLQREAQTLLNNGGIRTPADLDYLRQFDRECIERNLSPGGSADLLIITWFLAQI</sequence>
<name>CITG_ECOSM</name>
<comment type="function">
    <text evidence="1">Catalyzes the formation of 2-(5''-triphosphoribosyl)-3'-dephosphocoenzyme-A, the precursor of the prosthetic group of the holo-acyl carrier protein (gamma chain) of citrate lyase, from ATP and dephospho-CoA.</text>
</comment>
<comment type="catalytic activity">
    <reaction evidence="1">
        <text>3'-dephospho-CoA + ATP = 2'-(5''-triphospho-alpha-D-ribosyl)-3'-dephospho-CoA + adenine</text>
        <dbReference type="Rhea" id="RHEA:15117"/>
        <dbReference type="ChEBI" id="CHEBI:16708"/>
        <dbReference type="ChEBI" id="CHEBI:30616"/>
        <dbReference type="ChEBI" id="CHEBI:57328"/>
        <dbReference type="ChEBI" id="CHEBI:61378"/>
        <dbReference type="EC" id="2.4.2.52"/>
    </reaction>
</comment>
<comment type="similarity">
    <text evidence="1">Belongs to the CitG/MdcB family.</text>
</comment>
<organism>
    <name type="scientific">Escherichia coli (strain SMS-3-5 / SECEC)</name>
    <dbReference type="NCBI Taxonomy" id="439855"/>
    <lineage>
        <taxon>Bacteria</taxon>
        <taxon>Pseudomonadati</taxon>
        <taxon>Pseudomonadota</taxon>
        <taxon>Gammaproteobacteria</taxon>
        <taxon>Enterobacterales</taxon>
        <taxon>Enterobacteriaceae</taxon>
        <taxon>Escherichia</taxon>
    </lineage>
</organism>
<protein>
    <recommendedName>
        <fullName evidence="1">2-(5''-triphosphoribosyl)-3'-dephosphocoenzyme-A synthase</fullName>
        <shortName evidence="1">2-(5''-triphosphoribosyl)-3'-dephospho-CoA synthase</shortName>
        <ecNumber evidence="1">2.4.2.52</ecNumber>
    </recommendedName>
</protein>
<accession>B1LKK5</accession>
<reference key="1">
    <citation type="journal article" date="2008" name="J. Bacteriol.">
        <title>Insights into the environmental resistance gene pool from the genome sequence of the multidrug-resistant environmental isolate Escherichia coli SMS-3-5.</title>
        <authorList>
            <person name="Fricke W.F."/>
            <person name="Wright M.S."/>
            <person name="Lindell A.H."/>
            <person name="Harkins D.M."/>
            <person name="Baker-Austin C."/>
            <person name="Ravel J."/>
            <person name="Stepanauskas R."/>
        </authorList>
    </citation>
    <scope>NUCLEOTIDE SEQUENCE [LARGE SCALE GENOMIC DNA]</scope>
    <source>
        <strain>SMS-3-5 / SECEC</strain>
    </source>
</reference>
<gene>
    <name evidence="1" type="primary">citG</name>
    <name type="ordered locus">EcSMS35_0632</name>
</gene>
<feature type="chain" id="PRO_1000123224" description="2-(5''-triphosphoribosyl)-3'-dephosphocoenzyme-A synthase">
    <location>
        <begin position="1"/>
        <end position="292"/>
    </location>
</feature>